<reference key="1">
    <citation type="journal article" date="2003" name="Nat. Genet.">
        <title>Comparative analysis of the genome sequences of Bordetella pertussis, Bordetella parapertussis and Bordetella bronchiseptica.</title>
        <authorList>
            <person name="Parkhill J."/>
            <person name="Sebaihia M."/>
            <person name="Preston A."/>
            <person name="Murphy L.D."/>
            <person name="Thomson N.R."/>
            <person name="Harris D.E."/>
            <person name="Holden M.T.G."/>
            <person name="Churcher C.M."/>
            <person name="Bentley S.D."/>
            <person name="Mungall K.L."/>
            <person name="Cerdeno-Tarraga A.-M."/>
            <person name="Temple L."/>
            <person name="James K.D."/>
            <person name="Harris B."/>
            <person name="Quail M.A."/>
            <person name="Achtman M."/>
            <person name="Atkin R."/>
            <person name="Baker S."/>
            <person name="Basham D."/>
            <person name="Bason N."/>
            <person name="Cherevach I."/>
            <person name="Chillingworth T."/>
            <person name="Collins M."/>
            <person name="Cronin A."/>
            <person name="Davis P."/>
            <person name="Doggett J."/>
            <person name="Feltwell T."/>
            <person name="Goble A."/>
            <person name="Hamlin N."/>
            <person name="Hauser H."/>
            <person name="Holroyd S."/>
            <person name="Jagels K."/>
            <person name="Leather S."/>
            <person name="Moule S."/>
            <person name="Norberczak H."/>
            <person name="O'Neil S."/>
            <person name="Ormond D."/>
            <person name="Price C."/>
            <person name="Rabbinowitsch E."/>
            <person name="Rutter S."/>
            <person name="Sanders M."/>
            <person name="Saunders D."/>
            <person name="Seeger K."/>
            <person name="Sharp S."/>
            <person name="Simmonds M."/>
            <person name="Skelton J."/>
            <person name="Squares R."/>
            <person name="Squares S."/>
            <person name="Stevens K."/>
            <person name="Unwin L."/>
            <person name="Whitehead S."/>
            <person name="Barrell B.G."/>
            <person name="Maskell D.J."/>
        </authorList>
    </citation>
    <scope>NUCLEOTIDE SEQUENCE [LARGE SCALE GENOMIC DNA]</scope>
    <source>
        <strain>ATCC BAA-588 / NCTC 13252 / RB50</strain>
    </source>
</reference>
<protein>
    <recommendedName>
        <fullName evidence="1">Undecaprenyl-diphosphatase</fullName>
        <ecNumber evidence="1">3.6.1.27</ecNumber>
    </recommendedName>
    <alternativeName>
        <fullName evidence="1">Bacitracin resistance protein</fullName>
    </alternativeName>
    <alternativeName>
        <fullName evidence="1">Undecaprenyl pyrophosphate phosphatase</fullName>
    </alternativeName>
</protein>
<feature type="chain" id="PRO_0000151113" description="Undecaprenyl-diphosphatase">
    <location>
        <begin position="1"/>
        <end position="287"/>
    </location>
</feature>
<feature type="transmembrane region" description="Helical" evidence="1">
    <location>
        <begin position="6"/>
        <end position="26"/>
    </location>
</feature>
<feature type="transmembrane region" description="Helical" evidence="1">
    <location>
        <begin position="45"/>
        <end position="65"/>
    </location>
</feature>
<feature type="transmembrane region" description="Helical" evidence="1">
    <location>
        <begin position="89"/>
        <end position="109"/>
    </location>
</feature>
<feature type="transmembrane region" description="Helical" evidence="1">
    <location>
        <begin position="111"/>
        <end position="131"/>
    </location>
</feature>
<feature type="transmembrane region" description="Helical" evidence="1">
    <location>
        <begin position="204"/>
        <end position="224"/>
    </location>
</feature>
<feature type="transmembrane region" description="Helical" evidence="1">
    <location>
        <begin position="238"/>
        <end position="258"/>
    </location>
</feature>
<feature type="transmembrane region" description="Helical" evidence="1">
    <location>
        <begin position="266"/>
        <end position="286"/>
    </location>
</feature>
<proteinExistence type="inferred from homology"/>
<keyword id="KW-0046">Antibiotic resistance</keyword>
<keyword id="KW-0997">Cell inner membrane</keyword>
<keyword id="KW-1003">Cell membrane</keyword>
<keyword id="KW-0133">Cell shape</keyword>
<keyword id="KW-0961">Cell wall biogenesis/degradation</keyword>
<keyword id="KW-0378">Hydrolase</keyword>
<keyword id="KW-0472">Membrane</keyword>
<keyword id="KW-0573">Peptidoglycan synthesis</keyword>
<keyword id="KW-0812">Transmembrane</keyword>
<keyword id="KW-1133">Transmembrane helix</keyword>
<accession>Q7WLL4</accession>
<evidence type="ECO:0000255" key="1">
    <source>
        <dbReference type="HAMAP-Rule" id="MF_01006"/>
    </source>
</evidence>
<gene>
    <name evidence="1" type="primary">uppP</name>
    <name type="synonym">bacA</name>
    <name type="synonym">upk</name>
    <name type="ordered locus">BB1731</name>
</gene>
<sequence length="287" mass="31014">MTDSTLHLLKAFFLGIVEGLTEFIPVSSTGHLIVIGDWINFASSSGKVFEVVIQFGSILAVMWIFRARLWQLIRGTLTGVRQEVNFTRNLLLAFLPAAVIGAIFIKSIKQVFYHPGVVAVTLVVGGFIMLWVERRAPHTPGDAPGAADDTASDERATAHTLEQISAKQALGVGVAQCVAMIPGVSRSGATIIGGMIAGIQRKTATEFSFFLAMPTMLGAAVYDLYRNIGLLSQHDMSAIAVGFVAAFLSALVVVRAVLRFVANHTYRVFAWYRIALGLVVAAWIYAK</sequence>
<dbReference type="EC" id="3.6.1.27" evidence="1"/>
<dbReference type="EMBL" id="BX640442">
    <property type="protein sequence ID" value="CAE32228.1"/>
    <property type="molecule type" value="Genomic_DNA"/>
</dbReference>
<dbReference type="RefSeq" id="WP_003809994.1">
    <property type="nucleotide sequence ID" value="NC_002927.3"/>
</dbReference>
<dbReference type="SMR" id="Q7WLL4"/>
<dbReference type="KEGG" id="bbr:BB1731"/>
<dbReference type="eggNOG" id="COG1968">
    <property type="taxonomic scope" value="Bacteria"/>
</dbReference>
<dbReference type="HOGENOM" id="CLU_060296_2_0_4"/>
<dbReference type="Proteomes" id="UP000001027">
    <property type="component" value="Chromosome"/>
</dbReference>
<dbReference type="GO" id="GO:0005886">
    <property type="term" value="C:plasma membrane"/>
    <property type="evidence" value="ECO:0007669"/>
    <property type="project" value="UniProtKB-SubCell"/>
</dbReference>
<dbReference type="GO" id="GO:0050380">
    <property type="term" value="F:undecaprenyl-diphosphatase activity"/>
    <property type="evidence" value="ECO:0007669"/>
    <property type="project" value="UniProtKB-UniRule"/>
</dbReference>
<dbReference type="GO" id="GO:0071555">
    <property type="term" value="P:cell wall organization"/>
    <property type="evidence" value="ECO:0007669"/>
    <property type="project" value="UniProtKB-KW"/>
</dbReference>
<dbReference type="GO" id="GO:0009252">
    <property type="term" value="P:peptidoglycan biosynthetic process"/>
    <property type="evidence" value="ECO:0007669"/>
    <property type="project" value="UniProtKB-KW"/>
</dbReference>
<dbReference type="GO" id="GO:0008360">
    <property type="term" value="P:regulation of cell shape"/>
    <property type="evidence" value="ECO:0007669"/>
    <property type="project" value="UniProtKB-KW"/>
</dbReference>
<dbReference type="GO" id="GO:0046677">
    <property type="term" value="P:response to antibiotic"/>
    <property type="evidence" value="ECO:0007669"/>
    <property type="project" value="UniProtKB-UniRule"/>
</dbReference>
<dbReference type="HAMAP" id="MF_01006">
    <property type="entry name" value="Undec_diphosphatase"/>
    <property type="match status" value="1"/>
</dbReference>
<dbReference type="InterPro" id="IPR003824">
    <property type="entry name" value="UppP"/>
</dbReference>
<dbReference type="NCBIfam" id="NF001389">
    <property type="entry name" value="PRK00281.1-2"/>
    <property type="match status" value="1"/>
</dbReference>
<dbReference type="NCBIfam" id="NF001390">
    <property type="entry name" value="PRK00281.1-4"/>
    <property type="match status" value="1"/>
</dbReference>
<dbReference type="PANTHER" id="PTHR30622">
    <property type="entry name" value="UNDECAPRENYL-DIPHOSPHATASE"/>
    <property type="match status" value="1"/>
</dbReference>
<dbReference type="PANTHER" id="PTHR30622:SF3">
    <property type="entry name" value="UNDECAPRENYL-DIPHOSPHATASE"/>
    <property type="match status" value="1"/>
</dbReference>
<dbReference type="Pfam" id="PF02673">
    <property type="entry name" value="BacA"/>
    <property type="match status" value="1"/>
</dbReference>
<name>UPPP_BORBR</name>
<organism>
    <name type="scientific">Bordetella bronchiseptica (strain ATCC BAA-588 / NCTC 13252 / RB50)</name>
    <name type="common">Alcaligenes bronchisepticus</name>
    <dbReference type="NCBI Taxonomy" id="257310"/>
    <lineage>
        <taxon>Bacteria</taxon>
        <taxon>Pseudomonadati</taxon>
        <taxon>Pseudomonadota</taxon>
        <taxon>Betaproteobacteria</taxon>
        <taxon>Burkholderiales</taxon>
        <taxon>Alcaligenaceae</taxon>
        <taxon>Bordetella</taxon>
    </lineage>
</organism>
<comment type="function">
    <text evidence="1">Catalyzes the dephosphorylation of undecaprenyl diphosphate (UPP). Confers resistance to bacitracin.</text>
</comment>
<comment type="catalytic activity">
    <reaction evidence="1">
        <text>di-trans,octa-cis-undecaprenyl diphosphate + H2O = di-trans,octa-cis-undecaprenyl phosphate + phosphate + H(+)</text>
        <dbReference type="Rhea" id="RHEA:28094"/>
        <dbReference type="ChEBI" id="CHEBI:15377"/>
        <dbReference type="ChEBI" id="CHEBI:15378"/>
        <dbReference type="ChEBI" id="CHEBI:43474"/>
        <dbReference type="ChEBI" id="CHEBI:58405"/>
        <dbReference type="ChEBI" id="CHEBI:60392"/>
        <dbReference type="EC" id="3.6.1.27"/>
    </reaction>
</comment>
<comment type="subcellular location">
    <subcellularLocation>
        <location evidence="1">Cell inner membrane</location>
        <topology evidence="1">Multi-pass membrane protein</topology>
    </subcellularLocation>
</comment>
<comment type="miscellaneous">
    <text>Bacitracin is thought to be involved in the inhibition of peptidoglycan synthesis by sequestering undecaprenyl diphosphate, thereby reducing the pool of lipid carrier available.</text>
</comment>
<comment type="similarity">
    <text evidence="1">Belongs to the UppP family.</text>
</comment>